<gene>
    <name type="ordered locus">Mal-122</name>
    <name type="ORF">j2R</name>
</gene>
<accession>Q65230</accession>
<organism>
    <name type="scientific">African swine fever virus (isolate Tick/Malawi/Lil 20-1/1983)</name>
    <name type="common">ASFV</name>
    <dbReference type="NCBI Taxonomy" id="10500"/>
    <lineage>
        <taxon>Viruses</taxon>
        <taxon>Varidnaviria</taxon>
        <taxon>Bamfordvirae</taxon>
        <taxon>Nucleocytoviricota</taxon>
        <taxon>Pokkesviricetes</taxon>
        <taxon>Asfuvirales</taxon>
        <taxon>Asfarviridae</taxon>
        <taxon>Asfivirus</taxon>
        <taxon>African swine fever virus</taxon>
    </lineage>
</organism>
<reference key="1">
    <citation type="journal article" date="1994" name="J. Gen. Virol.">
        <title>Nucleotide sequence of a 55 kbp region from the right end of the genome of a pathogenic African swine fever virus isolate (Malawi LIL20/1).</title>
        <authorList>
            <person name="Dixon L.K."/>
            <person name="Twigg S.R.F."/>
            <person name="Baylis S.A."/>
            <person name="Vydelingum S."/>
            <person name="Bristow C."/>
            <person name="Hammond J.M."/>
            <person name="Smith G.L."/>
        </authorList>
    </citation>
    <scope>NUCLEOTIDE SEQUENCE [GENOMIC DNA]</scope>
</reference>
<reference key="2">
    <citation type="submission" date="2003-03" db="EMBL/GenBank/DDBJ databases">
        <title>African swine fever virus genomes.</title>
        <authorList>
            <person name="Kutish G.F."/>
            <person name="Rock D.L."/>
        </authorList>
    </citation>
    <scope>NUCLEOTIDE SEQUENCE [LARGE SCALE GENOMIC DNA]</scope>
</reference>
<organismHost>
    <name type="scientific">Ornithodoros</name>
    <name type="common">relapsing fever ticks</name>
    <dbReference type="NCBI Taxonomy" id="6937"/>
</organismHost>
<organismHost>
    <name type="scientific">Phacochoerus aethiopicus</name>
    <name type="common">Warthog</name>
    <dbReference type="NCBI Taxonomy" id="85517"/>
</organismHost>
<organismHost>
    <name type="scientific">Phacochoerus africanus</name>
    <name type="common">Warthog</name>
    <dbReference type="NCBI Taxonomy" id="41426"/>
</organismHost>
<organismHost>
    <name type="scientific">Potamochoerus larvatus</name>
    <name type="common">Bushpig</name>
    <dbReference type="NCBI Taxonomy" id="273792"/>
</organismHost>
<organismHost>
    <name type="scientific">Sus scrofa</name>
    <name type="common">Pig</name>
    <dbReference type="NCBI Taxonomy" id="9823"/>
</organismHost>
<keyword id="KW-0426">Late protein</keyword>
<keyword id="KW-0946">Virion</keyword>
<comment type="subcellular location">
    <subcellularLocation>
        <location evidence="1">Virion</location>
    </subcellularLocation>
</comment>
<comment type="induction">
    <text evidence="3">Expressed in the late phase of the viral replicative cycle.</text>
</comment>
<comment type="similarity">
    <text evidence="3">Belongs to the asfivirus H171R family.</text>
</comment>
<proteinExistence type="inferred from homology"/>
<protein>
    <recommendedName>
        <fullName>Uncharacterized protein H171R</fullName>
        <shortName>pH171R</shortName>
    </recommendedName>
</protein>
<evidence type="ECO:0000250" key="1">
    <source>
        <dbReference type="UniProtKB" id="Q65185"/>
    </source>
</evidence>
<evidence type="ECO:0000256" key="2">
    <source>
        <dbReference type="SAM" id="MobiDB-lite"/>
    </source>
</evidence>
<evidence type="ECO:0000305" key="3"/>
<sequence>MVVYDLLVSLSKESIDVLRFVEANLAAFNQQYIFFNIQRKNSITTPLLITPQQEKISQIVDFLMDEYNKNNRRPSGPPREQPMHPLLPYQQSSDEQPMMPYQQPPGDDDQPYEQIYHKKHASQQVNTELSDYYQHILALGDEDKVMDSMLKLPEKAKRDDSDDEDSMFPIKKLTT</sequence>
<feature type="chain" id="PRO_0000373555" description="Uncharacterized protein H171R">
    <location>
        <begin position="1"/>
        <end position="175"/>
    </location>
</feature>
<feature type="region of interest" description="Disordered" evidence="2">
    <location>
        <begin position="68"/>
        <end position="112"/>
    </location>
</feature>
<feature type="region of interest" description="Disordered" evidence="2">
    <location>
        <begin position="153"/>
        <end position="175"/>
    </location>
</feature>
<feature type="compositionally biased region" description="Low complexity" evidence="2">
    <location>
        <begin position="94"/>
        <end position="105"/>
    </location>
</feature>
<name>VF171_ASFM2</name>
<dbReference type="EMBL" id="X71982">
    <property type="protein sequence ID" value="CAA50822.1"/>
    <property type="molecule type" value="Genomic_DNA"/>
</dbReference>
<dbReference type="EMBL" id="AY261361">
    <property type="status" value="NOT_ANNOTATED_CDS"/>
    <property type="molecule type" value="Genomic_DNA"/>
</dbReference>
<dbReference type="Proteomes" id="UP000000860">
    <property type="component" value="Segment"/>
</dbReference>
<dbReference type="GO" id="GO:0044423">
    <property type="term" value="C:virion component"/>
    <property type="evidence" value="ECO:0007669"/>
    <property type="project" value="UniProtKB-KW"/>
</dbReference>